<reference key="1">
    <citation type="submission" date="2006-12" db="EMBL/GenBank/DDBJ databases">
        <title>NISC comparative sequencing initiative.</title>
        <authorList>
            <person name="Antonellis A."/>
            <person name="Ayele K."/>
            <person name="Benjamin B."/>
            <person name="Blakesley R.W."/>
            <person name="Boakye A."/>
            <person name="Bouffard G.G."/>
            <person name="Brinkley C."/>
            <person name="Brooks S."/>
            <person name="Chu G."/>
            <person name="Coleman H."/>
            <person name="Engle J."/>
            <person name="Gestole M."/>
            <person name="Greene A."/>
            <person name="Guan X."/>
            <person name="Gupta J."/>
            <person name="Haghighi P."/>
            <person name="Han J."/>
            <person name="Hansen N."/>
            <person name="Ho S.-L."/>
            <person name="Hu P."/>
            <person name="Hunter G."/>
            <person name="Hurle B."/>
            <person name="Idol J.R."/>
            <person name="Kwong P."/>
            <person name="Laric P."/>
            <person name="Larson S."/>
            <person name="Lee-Lin S.-Q."/>
            <person name="Legaspi R."/>
            <person name="Madden M."/>
            <person name="Maduro Q.L."/>
            <person name="Maduro V.B."/>
            <person name="Margulies E.H."/>
            <person name="Masiello C."/>
            <person name="Maskeri B."/>
            <person name="McDowell J."/>
            <person name="Mojidi H.A."/>
            <person name="Mullikin J.C."/>
            <person name="Oestreicher J.S."/>
            <person name="Park M."/>
            <person name="Portnoy M.E."/>
            <person name="Prasad A."/>
            <person name="Puri O."/>
            <person name="Reddix-Dugue N."/>
            <person name="Schandler K."/>
            <person name="Schueler M.G."/>
            <person name="Sison C."/>
            <person name="Stantripop S."/>
            <person name="Stephen E."/>
            <person name="Taye A."/>
            <person name="Thomas J.W."/>
            <person name="Thomas P.J."/>
            <person name="Tsipouri V."/>
            <person name="Ung L."/>
            <person name="Vogt J.L."/>
            <person name="Wetherby K.D."/>
            <person name="Young A."/>
            <person name="Green E.D."/>
        </authorList>
    </citation>
    <scope>NUCLEOTIDE SEQUENCE [LARGE SCALE GENOMIC DNA]</scope>
</reference>
<gene>
    <name type="primary">WNT2</name>
</gene>
<accession>A1X153</accession>
<organism>
    <name type="scientific">Echinops telfairi</name>
    <name type="common">Lesser hedgehog tenrec</name>
    <dbReference type="NCBI Taxonomy" id="9371"/>
    <lineage>
        <taxon>Eukaryota</taxon>
        <taxon>Metazoa</taxon>
        <taxon>Chordata</taxon>
        <taxon>Craniata</taxon>
        <taxon>Vertebrata</taxon>
        <taxon>Euteleostomi</taxon>
        <taxon>Mammalia</taxon>
        <taxon>Eutheria</taxon>
        <taxon>Afrotheria</taxon>
        <taxon>Tenrecidae</taxon>
        <taxon>Tenrecinae</taxon>
        <taxon>Echinops</taxon>
    </lineage>
</organism>
<sequence>MNAPLAGIWPWLPLLWAWLVPEVSSSWWYMRATGTSRVMCDNVPGLVSRQRQLCHRHPDVMRAIGLGVAEWTAECQHQFRQHRWNCDTLDRDHSLFGRLLLRSSRESAFVYAISSAGVVFAITRACSQGELKSCSCDPKKKGTAKDSRGTFDWGGCSDNIDYGVKFARAFVDAKEKKGKDARALMNLHNNRAGRKAVKRFLKQECKCHGVSGSCTLRTCWLAMADFRKTGDYLWRKYNGAIQVVMNQDGTGFTVANKRFKKPTKNDLVYFENSPDYCIRDRDAGSPGTAGRVCNLTSRGMDSCEVMCCGRGYDTSRVTRMTKCECKFHWCCAVRCQDCLEALDVHTCKAPKSADWAVPT</sequence>
<dbReference type="EMBL" id="DP000274">
    <property type="protein sequence ID" value="ABL76169.1"/>
    <property type="molecule type" value="Genomic_DNA"/>
</dbReference>
<dbReference type="RefSeq" id="XP_004707826.1">
    <property type="nucleotide sequence ID" value="XM_004707769.2"/>
</dbReference>
<dbReference type="SMR" id="A1X153"/>
<dbReference type="GlyCosmos" id="A1X153">
    <property type="glycosylation" value="1 site, No reported glycans"/>
</dbReference>
<dbReference type="GeneID" id="101651785"/>
<dbReference type="KEGG" id="etf:101651785"/>
<dbReference type="CTD" id="7472"/>
<dbReference type="HOGENOM" id="CLU_033039_1_4_1"/>
<dbReference type="OrthoDB" id="5945655at2759"/>
<dbReference type="TreeFam" id="TF105310"/>
<dbReference type="Proteomes" id="UP000694863">
    <property type="component" value="Unplaced"/>
</dbReference>
<dbReference type="GO" id="GO:0005615">
    <property type="term" value="C:extracellular space"/>
    <property type="evidence" value="ECO:0007669"/>
    <property type="project" value="TreeGrafter"/>
</dbReference>
<dbReference type="GO" id="GO:0005125">
    <property type="term" value="F:cytokine activity"/>
    <property type="evidence" value="ECO:0007669"/>
    <property type="project" value="TreeGrafter"/>
</dbReference>
<dbReference type="GO" id="GO:0005109">
    <property type="term" value="F:frizzled binding"/>
    <property type="evidence" value="ECO:0007669"/>
    <property type="project" value="TreeGrafter"/>
</dbReference>
<dbReference type="GO" id="GO:0048513">
    <property type="term" value="P:animal organ development"/>
    <property type="evidence" value="ECO:0007669"/>
    <property type="project" value="UniProtKB-ARBA"/>
</dbReference>
<dbReference type="GO" id="GO:0060070">
    <property type="term" value="P:canonical Wnt signaling pathway"/>
    <property type="evidence" value="ECO:0007669"/>
    <property type="project" value="TreeGrafter"/>
</dbReference>
<dbReference type="GO" id="GO:0045165">
    <property type="term" value="P:cell fate commitment"/>
    <property type="evidence" value="ECO:0007669"/>
    <property type="project" value="TreeGrafter"/>
</dbReference>
<dbReference type="GO" id="GO:0030182">
    <property type="term" value="P:neuron differentiation"/>
    <property type="evidence" value="ECO:0007669"/>
    <property type="project" value="TreeGrafter"/>
</dbReference>
<dbReference type="CDD" id="cd19345">
    <property type="entry name" value="Wnt_Wnt2"/>
    <property type="match status" value="1"/>
</dbReference>
<dbReference type="FunFam" id="3.30.2460.20:FF:000001">
    <property type="entry name" value="Wnt homolog"/>
    <property type="match status" value="1"/>
</dbReference>
<dbReference type="Gene3D" id="3.30.2460.20">
    <property type="match status" value="1"/>
</dbReference>
<dbReference type="InterPro" id="IPR005817">
    <property type="entry name" value="Wnt"/>
</dbReference>
<dbReference type="InterPro" id="IPR009140">
    <property type="entry name" value="Wnt2"/>
</dbReference>
<dbReference type="InterPro" id="IPR043158">
    <property type="entry name" value="Wnt_C"/>
</dbReference>
<dbReference type="InterPro" id="IPR018161">
    <property type="entry name" value="Wnt_CS"/>
</dbReference>
<dbReference type="PANTHER" id="PTHR12027:SF86">
    <property type="entry name" value="PROTEIN WNT-2"/>
    <property type="match status" value="1"/>
</dbReference>
<dbReference type="PANTHER" id="PTHR12027">
    <property type="entry name" value="WNT RELATED"/>
    <property type="match status" value="1"/>
</dbReference>
<dbReference type="Pfam" id="PF00110">
    <property type="entry name" value="wnt"/>
    <property type="match status" value="1"/>
</dbReference>
<dbReference type="PRINTS" id="PR01842">
    <property type="entry name" value="WNT2PROTEIN"/>
</dbReference>
<dbReference type="PRINTS" id="PR01349">
    <property type="entry name" value="WNTPROTEIN"/>
</dbReference>
<dbReference type="SMART" id="SM00097">
    <property type="entry name" value="WNT1"/>
    <property type="match status" value="1"/>
</dbReference>
<dbReference type="PROSITE" id="PS00246">
    <property type="entry name" value="WNT1"/>
    <property type="match status" value="1"/>
</dbReference>
<name>WNT2_ECHTE</name>
<evidence type="ECO:0000250" key="1"/>
<evidence type="ECO:0000250" key="2">
    <source>
        <dbReference type="UniProtKB" id="P27467"/>
    </source>
</evidence>
<evidence type="ECO:0000250" key="3">
    <source>
        <dbReference type="UniProtKB" id="P28026"/>
    </source>
</evidence>
<evidence type="ECO:0000250" key="4">
    <source>
        <dbReference type="UniProtKB" id="P56704"/>
    </source>
</evidence>
<evidence type="ECO:0000255" key="5"/>
<evidence type="ECO:0000305" key="6"/>
<comment type="function">
    <text evidence="1">Ligand for members of the frizzled family of seven transmembrane receptors. Probable developmental protein. May be a signaling molecule which affects the development of discrete regions of tissues. Is likely to signal over only few cell diameters (By similarity).</text>
</comment>
<comment type="subcellular location">
    <subcellularLocation>
        <location evidence="1">Secreted</location>
        <location evidence="1">Extracellular space</location>
        <location evidence="1">Extracellular matrix</location>
    </subcellularLocation>
</comment>
<comment type="PTM">
    <text evidence="2 4">Palmitoleoylation is required for efficient binding to frizzled receptors. Depalmitoleoylation leads to Wnt signaling pathway inhibition.</text>
</comment>
<comment type="similarity">
    <text evidence="6">Belongs to the Wnt family.</text>
</comment>
<proteinExistence type="inferred from homology"/>
<feature type="signal peptide" evidence="5">
    <location>
        <begin position="1"/>
        <end position="25"/>
    </location>
</feature>
<feature type="chain" id="PRO_0000279197" description="Protein Wnt-2">
    <location>
        <begin position="26"/>
        <end position="359"/>
    </location>
</feature>
<feature type="lipid moiety-binding region" description="O-palmitoleoyl serine; by PORCN" evidence="4">
    <location>
        <position position="211"/>
    </location>
</feature>
<feature type="glycosylation site" description="N-linked (GlcNAc...) asparagine" evidence="5">
    <location>
        <position position="294"/>
    </location>
</feature>
<feature type="disulfide bond" evidence="3">
    <location>
        <begin position="75"/>
        <end position="86"/>
    </location>
</feature>
<feature type="disulfide bond" evidence="3">
    <location>
        <begin position="126"/>
        <end position="134"/>
    </location>
</feature>
<feature type="disulfide bond" evidence="3">
    <location>
        <begin position="136"/>
        <end position="156"/>
    </location>
</feature>
<feature type="disulfide bond" evidence="3">
    <location>
        <begin position="205"/>
        <end position="219"/>
    </location>
</feature>
<feature type="disulfide bond" evidence="3">
    <location>
        <begin position="207"/>
        <end position="214"/>
    </location>
</feature>
<feature type="disulfide bond" evidence="3">
    <location>
        <begin position="277"/>
        <end position="308"/>
    </location>
</feature>
<feature type="disulfide bond" evidence="3">
    <location>
        <begin position="293"/>
        <end position="303"/>
    </location>
</feature>
<feature type="disulfide bond" evidence="3">
    <location>
        <begin position="307"/>
        <end position="347"/>
    </location>
</feature>
<feature type="disulfide bond" evidence="3">
    <location>
        <begin position="323"/>
        <end position="338"/>
    </location>
</feature>
<feature type="disulfide bond" evidence="3">
    <location>
        <begin position="325"/>
        <end position="335"/>
    </location>
</feature>
<feature type="disulfide bond" evidence="3">
    <location>
        <begin position="330"/>
        <end position="331"/>
    </location>
</feature>
<keyword id="KW-0217">Developmental protein</keyword>
<keyword id="KW-1015">Disulfide bond</keyword>
<keyword id="KW-0272">Extracellular matrix</keyword>
<keyword id="KW-0325">Glycoprotein</keyword>
<keyword id="KW-0449">Lipoprotein</keyword>
<keyword id="KW-0964">Secreted</keyword>
<keyword id="KW-0732">Signal</keyword>
<keyword id="KW-0879">Wnt signaling pathway</keyword>
<protein>
    <recommendedName>
        <fullName>Protein Wnt-2</fullName>
    </recommendedName>
</protein>